<protein>
    <recommendedName>
        <fullName>Dynein axonemal intermediate chain 1</fullName>
    </recommendedName>
    <alternativeName>
        <fullName>Axonemal dynein intermediate chain 1</fullName>
    </alternativeName>
</protein>
<organism>
    <name type="scientific">Mus musculus</name>
    <name type="common">Mouse</name>
    <dbReference type="NCBI Taxonomy" id="10090"/>
    <lineage>
        <taxon>Eukaryota</taxon>
        <taxon>Metazoa</taxon>
        <taxon>Chordata</taxon>
        <taxon>Craniata</taxon>
        <taxon>Vertebrata</taxon>
        <taxon>Euteleostomi</taxon>
        <taxon>Mammalia</taxon>
        <taxon>Eutheria</taxon>
        <taxon>Euarchontoglires</taxon>
        <taxon>Glires</taxon>
        <taxon>Rodentia</taxon>
        <taxon>Myomorpha</taxon>
        <taxon>Muroidea</taxon>
        <taxon>Muridae</taxon>
        <taxon>Murinae</taxon>
        <taxon>Mus</taxon>
        <taxon>Mus</taxon>
    </lineage>
</organism>
<feature type="chain" id="PRO_0000254655" description="Dynein axonemal intermediate chain 1">
    <location>
        <begin position="1"/>
        <end position="701"/>
    </location>
</feature>
<feature type="repeat" description="WD 1">
    <location>
        <begin position="382"/>
        <end position="422"/>
    </location>
</feature>
<feature type="repeat" description="WD 2">
    <location>
        <begin position="431"/>
        <end position="474"/>
    </location>
</feature>
<feature type="repeat" description="WD 3">
    <location>
        <begin position="539"/>
        <end position="579"/>
    </location>
</feature>
<feature type="repeat" description="WD 4">
    <location>
        <begin position="581"/>
        <end position="621"/>
    </location>
</feature>
<feature type="repeat" description="WD 5">
    <location>
        <begin position="629"/>
        <end position="668"/>
    </location>
</feature>
<feature type="region of interest" description="Disordered" evidence="3">
    <location>
        <begin position="1"/>
        <end position="45"/>
    </location>
</feature>
<feature type="region of interest" description="Disordered" evidence="3">
    <location>
        <begin position="119"/>
        <end position="165"/>
    </location>
</feature>
<feature type="compositionally biased region" description="Acidic residues" evidence="3">
    <location>
        <begin position="136"/>
        <end position="155"/>
    </location>
</feature>
<feature type="modified residue" description="Phosphoserine" evidence="2">
    <location>
        <position position="124"/>
    </location>
</feature>
<feature type="modified residue" description="Phosphoserine" evidence="2">
    <location>
        <position position="127"/>
    </location>
</feature>
<feature type="sequence conflict" description="In Ref. 1; BAC33160." evidence="5" ref="1">
    <original>H</original>
    <variation>R</variation>
    <location>
        <position position="636"/>
    </location>
</feature>
<gene>
    <name type="primary">Dnai1</name>
    <name type="synonym">Dnaic1</name>
</gene>
<evidence type="ECO:0000250" key="1"/>
<evidence type="ECO:0000250" key="2">
    <source>
        <dbReference type="UniProtKB" id="Q9UI46"/>
    </source>
</evidence>
<evidence type="ECO:0000256" key="3">
    <source>
        <dbReference type="SAM" id="MobiDB-lite"/>
    </source>
</evidence>
<evidence type="ECO:0000269" key="4">
    <source>
    </source>
</evidence>
<evidence type="ECO:0000305" key="5"/>
<accession>Q8C0M8</accession>
<accession>Q8BKY5</accession>
<comment type="function">
    <text evidence="1">Part of the dynein complex of respiratory cilia.</text>
</comment>
<comment type="subunit">
    <text evidence="2 4">Consists of at least two heavy chains and a number of intermediate and light chains. Interacts with BICD2 (By similarity). Interacts with CFAP45 and CFAP52 (By similarity). Interacts with CFAP53 (PubMed:33347437).</text>
</comment>
<comment type="subcellular location">
    <subcellularLocation>
        <location evidence="2">Cytoplasm</location>
        <location evidence="2">Cytoskeleton</location>
        <location evidence="2">Cilium axoneme</location>
    </subcellularLocation>
</comment>
<comment type="similarity">
    <text evidence="5">Belongs to the dynein intermediate chain family.</text>
</comment>
<proteinExistence type="evidence at protein level"/>
<keyword id="KW-0966">Cell projection</keyword>
<keyword id="KW-0969">Cilium</keyword>
<keyword id="KW-0963">Cytoplasm</keyword>
<keyword id="KW-0206">Cytoskeleton</keyword>
<keyword id="KW-0243">Dynein</keyword>
<keyword id="KW-0493">Microtubule</keyword>
<keyword id="KW-0505">Motor protein</keyword>
<keyword id="KW-0597">Phosphoprotein</keyword>
<keyword id="KW-1185">Reference proteome</keyword>
<keyword id="KW-0677">Repeat</keyword>
<keyword id="KW-0853">WD repeat</keyword>
<reference key="1">
    <citation type="journal article" date="2005" name="Science">
        <title>The transcriptional landscape of the mammalian genome.</title>
        <authorList>
            <person name="Carninci P."/>
            <person name="Kasukawa T."/>
            <person name="Katayama S."/>
            <person name="Gough J."/>
            <person name="Frith M.C."/>
            <person name="Maeda N."/>
            <person name="Oyama R."/>
            <person name="Ravasi T."/>
            <person name="Lenhard B."/>
            <person name="Wells C."/>
            <person name="Kodzius R."/>
            <person name="Shimokawa K."/>
            <person name="Bajic V.B."/>
            <person name="Brenner S.E."/>
            <person name="Batalov S."/>
            <person name="Forrest A.R."/>
            <person name="Zavolan M."/>
            <person name="Davis M.J."/>
            <person name="Wilming L.G."/>
            <person name="Aidinis V."/>
            <person name="Allen J.E."/>
            <person name="Ambesi-Impiombato A."/>
            <person name="Apweiler R."/>
            <person name="Aturaliya R.N."/>
            <person name="Bailey T.L."/>
            <person name="Bansal M."/>
            <person name="Baxter L."/>
            <person name="Beisel K.W."/>
            <person name="Bersano T."/>
            <person name="Bono H."/>
            <person name="Chalk A.M."/>
            <person name="Chiu K.P."/>
            <person name="Choudhary V."/>
            <person name="Christoffels A."/>
            <person name="Clutterbuck D.R."/>
            <person name="Crowe M.L."/>
            <person name="Dalla E."/>
            <person name="Dalrymple B.P."/>
            <person name="de Bono B."/>
            <person name="Della Gatta G."/>
            <person name="di Bernardo D."/>
            <person name="Down T."/>
            <person name="Engstrom P."/>
            <person name="Fagiolini M."/>
            <person name="Faulkner G."/>
            <person name="Fletcher C.F."/>
            <person name="Fukushima T."/>
            <person name="Furuno M."/>
            <person name="Futaki S."/>
            <person name="Gariboldi M."/>
            <person name="Georgii-Hemming P."/>
            <person name="Gingeras T.R."/>
            <person name="Gojobori T."/>
            <person name="Green R.E."/>
            <person name="Gustincich S."/>
            <person name="Harbers M."/>
            <person name="Hayashi Y."/>
            <person name="Hensch T.K."/>
            <person name="Hirokawa N."/>
            <person name="Hill D."/>
            <person name="Huminiecki L."/>
            <person name="Iacono M."/>
            <person name="Ikeo K."/>
            <person name="Iwama A."/>
            <person name="Ishikawa T."/>
            <person name="Jakt M."/>
            <person name="Kanapin A."/>
            <person name="Katoh M."/>
            <person name="Kawasawa Y."/>
            <person name="Kelso J."/>
            <person name="Kitamura H."/>
            <person name="Kitano H."/>
            <person name="Kollias G."/>
            <person name="Krishnan S.P."/>
            <person name="Kruger A."/>
            <person name="Kummerfeld S.K."/>
            <person name="Kurochkin I.V."/>
            <person name="Lareau L.F."/>
            <person name="Lazarevic D."/>
            <person name="Lipovich L."/>
            <person name="Liu J."/>
            <person name="Liuni S."/>
            <person name="McWilliam S."/>
            <person name="Madan Babu M."/>
            <person name="Madera M."/>
            <person name="Marchionni L."/>
            <person name="Matsuda H."/>
            <person name="Matsuzawa S."/>
            <person name="Miki H."/>
            <person name="Mignone F."/>
            <person name="Miyake S."/>
            <person name="Morris K."/>
            <person name="Mottagui-Tabar S."/>
            <person name="Mulder N."/>
            <person name="Nakano N."/>
            <person name="Nakauchi H."/>
            <person name="Ng P."/>
            <person name="Nilsson R."/>
            <person name="Nishiguchi S."/>
            <person name="Nishikawa S."/>
            <person name="Nori F."/>
            <person name="Ohara O."/>
            <person name="Okazaki Y."/>
            <person name="Orlando V."/>
            <person name="Pang K.C."/>
            <person name="Pavan W.J."/>
            <person name="Pavesi G."/>
            <person name="Pesole G."/>
            <person name="Petrovsky N."/>
            <person name="Piazza S."/>
            <person name="Reed J."/>
            <person name="Reid J.F."/>
            <person name="Ring B.Z."/>
            <person name="Ringwald M."/>
            <person name="Rost B."/>
            <person name="Ruan Y."/>
            <person name="Salzberg S.L."/>
            <person name="Sandelin A."/>
            <person name="Schneider C."/>
            <person name="Schoenbach C."/>
            <person name="Sekiguchi K."/>
            <person name="Semple C.A."/>
            <person name="Seno S."/>
            <person name="Sessa L."/>
            <person name="Sheng Y."/>
            <person name="Shibata Y."/>
            <person name="Shimada H."/>
            <person name="Shimada K."/>
            <person name="Silva D."/>
            <person name="Sinclair B."/>
            <person name="Sperling S."/>
            <person name="Stupka E."/>
            <person name="Sugiura K."/>
            <person name="Sultana R."/>
            <person name="Takenaka Y."/>
            <person name="Taki K."/>
            <person name="Tammoja K."/>
            <person name="Tan S.L."/>
            <person name="Tang S."/>
            <person name="Taylor M.S."/>
            <person name="Tegner J."/>
            <person name="Teichmann S.A."/>
            <person name="Ueda H.R."/>
            <person name="van Nimwegen E."/>
            <person name="Verardo R."/>
            <person name="Wei C.L."/>
            <person name="Yagi K."/>
            <person name="Yamanishi H."/>
            <person name="Zabarovsky E."/>
            <person name="Zhu S."/>
            <person name="Zimmer A."/>
            <person name="Hide W."/>
            <person name="Bult C."/>
            <person name="Grimmond S.M."/>
            <person name="Teasdale R.D."/>
            <person name="Liu E.T."/>
            <person name="Brusic V."/>
            <person name="Quackenbush J."/>
            <person name="Wahlestedt C."/>
            <person name="Mattick J.S."/>
            <person name="Hume D.A."/>
            <person name="Kai C."/>
            <person name="Sasaki D."/>
            <person name="Tomaru Y."/>
            <person name="Fukuda S."/>
            <person name="Kanamori-Katayama M."/>
            <person name="Suzuki M."/>
            <person name="Aoki J."/>
            <person name="Arakawa T."/>
            <person name="Iida J."/>
            <person name="Imamura K."/>
            <person name="Itoh M."/>
            <person name="Kato T."/>
            <person name="Kawaji H."/>
            <person name="Kawagashira N."/>
            <person name="Kawashima T."/>
            <person name="Kojima M."/>
            <person name="Kondo S."/>
            <person name="Konno H."/>
            <person name="Nakano K."/>
            <person name="Ninomiya N."/>
            <person name="Nishio T."/>
            <person name="Okada M."/>
            <person name="Plessy C."/>
            <person name="Shibata K."/>
            <person name="Shiraki T."/>
            <person name="Suzuki S."/>
            <person name="Tagami M."/>
            <person name="Waki K."/>
            <person name="Watahiki A."/>
            <person name="Okamura-Oho Y."/>
            <person name="Suzuki H."/>
            <person name="Kawai J."/>
            <person name="Hayashizaki Y."/>
        </authorList>
    </citation>
    <scope>NUCLEOTIDE SEQUENCE [LARGE SCALE MRNA]</scope>
    <source>
        <strain>C57BL/6J</strain>
        <tissue>Corpus striatum</tissue>
        <tissue>Testis</tissue>
    </source>
</reference>
<reference key="2">
    <citation type="journal article" date="2010" name="Cell">
        <title>A tissue-specific atlas of mouse protein phosphorylation and expression.</title>
        <authorList>
            <person name="Huttlin E.L."/>
            <person name="Jedrychowski M.P."/>
            <person name="Elias J.E."/>
            <person name="Goswami T."/>
            <person name="Rad R."/>
            <person name="Beausoleil S.A."/>
            <person name="Villen J."/>
            <person name="Haas W."/>
            <person name="Sowa M.E."/>
            <person name="Gygi S.P."/>
        </authorList>
    </citation>
    <scope>IDENTIFICATION BY MASS SPECTROMETRY [LARGE SCALE ANALYSIS]</scope>
    <source>
        <tissue>Testis</tissue>
    </source>
</reference>
<reference key="3">
    <citation type="journal article" date="2020" name="PLoS Genet.">
        <title>CFAP53 regulates mammalian cilia-type motility patterns through differential localization and recruitment of axonemal dynein components.</title>
        <authorList>
            <person name="Ide T."/>
            <person name="Twan W.K."/>
            <person name="Lu H."/>
            <person name="Ikawa Y."/>
            <person name="Lim L.X."/>
            <person name="Henninger N."/>
            <person name="Nishimura H."/>
            <person name="Takaoka K."/>
            <person name="Narasimhan V."/>
            <person name="Yan X."/>
            <person name="Shiratori H."/>
            <person name="Roy S."/>
            <person name="Hamada H."/>
        </authorList>
    </citation>
    <scope>INTERACTION WITH CFAP53</scope>
</reference>
<sequence>MPSKQIRKQSISVTRGARRRDEDSGTDVGEGTDEWSQSKATVRPPDQLELTDAELKEEFTRILTANNPHAPQNIVRYSFKEGTYKLIGFVNQMAVHFSQVGNLIPKDSDEGRRQHYRDEMVAGSQESIKVVTSEAENLEEEEEPKEGEGEAEAEAEAGSQTDIPAAAETTEKVIEEELMAPVQPKERKLTNQFNFSERASQTFNNPLRDRECQMEPPPRTNFSATANQWEIYDAYVDELEKQEKTKEKEKAKTPVAKKTEKMAMRKLTSMESQSDDITKVTQAAKIVERMVNQNTYDDVAQDFKYYEDTADEYRDQEGTLLPLWKFQNDKAKRLAVTALCWNPKYKDLFAVGHGSYDFMKQSRGMLLLYSMKNPSFPEYMFSSESGIMCLDVHVDHPYLVVVGYYDGNVAIYNLKKPHSQPCFRSTSKSGKHTDPVWQVKWQKDDMDHNLNFFSVSSDGRIVSWTLVKSELVHIDIIKLKTEGSTTEIPEGLQLHTVGCGTAFDFHKEIDYMFLVGTEEGKIYKCSKSYSSQFLDTYDAHNMAVDAVLWNPYHTKVFMSCSSDWTVKIWDHTIKTPMFIYDLNSAVGDVAWAPYSSTVFAAVTTDGKAHVFDLAVNKYEAICNQPVVAKKKNKITHVQFNPIHPIIIVGDDRGHIICLKLSPNLRKMPKEKKGQEVQKGPAVEIAKLDKLLNLVREVKTKT</sequence>
<dbReference type="EMBL" id="AK030213">
    <property type="protein sequence ID" value="BAC26847.1"/>
    <property type="molecule type" value="mRNA"/>
</dbReference>
<dbReference type="EMBL" id="AK047808">
    <property type="protein sequence ID" value="BAC33160.1"/>
    <property type="molecule type" value="mRNA"/>
</dbReference>
<dbReference type="CCDS" id="CCDS18066.1"/>
<dbReference type="RefSeq" id="NP_780347.2">
    <property type="nucleotide sequence ID" value="NM_175138.4"/>
</dbReference>
<dbReference type="SMR" id="Q8C0M8"/>
<dbReference type="BioGRID" id="213117">
    <property type="interactions" value="3"/>
</dbReference>
<dbReference type="FunCoup" id="Q8C0M8">
    <property type="interactions" value="243"/>
</dbReference>
<dbReference type="STRING" id="10090.ENSMUSP00000100028"/>
<dbReference type="GlyGen" id="Q8C0M8">
    <property type="glycosylation" value="1 site, 1 O-linked glycan (1 site)"/>
</dbReference>
<dbReference type="iPTMnet" id="Q8C0M8"/>
<dbReference type="PhosphoSitePlus" id="Q8C0M8"/>
<dbReference type="PaxDb" id="10090-ENSMUSP00000100028"/>
<dbReference type="ProteomicsDB" id="277347"/>
<dbReference type="Antibodypedia" id="11255">
    <property type="antibodies" value="222 antibodies from 34 providers"/>
</dbReference>
<dbReference type="DNASU" id="68922"/>
<dbReference type="Ensembl" id="ENSMUST00000102963.10">
    <property type="protein sequence ID" value="ENSMUSP00000100028.4"/>
    <property type="gene ID" value="ENSMUSG00000061322.16"/>
</dbReference>
<dbReference type="GeneID" id="68922"/>
<dbReference type="KEGG" id="mmu:68922"/>
<dbReference type="UCSC" id="uc008sjc.2">
    <property type="organism name" value="mouse"/>
</dbReference>
<dbReference type="AGR" id="MGI:1916172"/>
<dbReference type="CTD" id="27019"/>
<dbReference type="MGI" id="MGI:1916172">
    <property type="gene designation" value="Dnai1"/>
</dbReference>
<dbReference type="VEuPathDB" id="HostDB:ENSMUSG00000061322"/>
<dbReference type="eggNOG" id="KOG1587">
    <property type="taxonomic scope" value="Eukaryota"/>
</dbReference>
<dbReference type="GeneTree" id="ENSGT00940000156436"/>
<dbReference type="HOGENOM" id="CLU_015820_2_0_1"/>
<dbReference type="InParanoid" id="Q8C0M8"/>
<dbReference type="OMA" id="VWEDMRA"/>
<dbReference type="OrthoDB" id="10261376at2759"/>
<dbReference type="PhylomeDB" id="Q8C0M8"/>
<dbReference type="TreeFam" id="TF300553"/>
<dbReference type="BioGRID-ORCS" id="68922">
    <property type="hits" value="3 hits in 76 CRISPR screens"/>
</dbReference>
<dbReference type="PRO" id="PR:Q8C0M8"/>
<dbReference type="Proteomes" id="UP000000589">
    <property type="component" value="Chromosome 4"/>
</dbReference>
<dbReference type="RNAct" id="Q8C0M8">
    <property type="molecule type" value="protein"/>
</dbReference>
<dbReference type="Bgee" id="ENSMUSG00000061322">
    <property type="expression patterns" value="Expressed in lumbar subsegment of spinal cord and 85 other cell types or tissues"/>
</dbReference>
<dbReference type="ExpressionAtlas" id="Q8C0M8">
    <property type="expression patterns" value="baseline and differential"/>
</dbReference>
<dbReference type="GO" id="GO:0097729">
    <property type="term" value="C:9+2 motile cilium"/>
    <property type="evidence" value="ECO:0000314"/>
    <property type="project" value="MGI"/>
</dbReference>
<dbReference type="GO" id="GO:0005813">
    <property type="term" value="C:centrosome"/>
    <property type="evidence" value="ECO:0000314"/>
    <property type="project" value="CAFA"/>
</dbReference>
<dbReference type="GO" id="GO:0005737">
    <property type="term" value="C:cytoplasm"/>
    <property type="evidence" value="ECO:0000314"/>
    <property type="project" value="CAFA"/>
</dbReference>
<dbReference type="GO" id="GO:0005576">
    <property type="term" value="C:extracellular region"/>
    <property type="evidence" value="ECO:0007669"/>
    <property type="project" value="GOC"/>
</dbReference>
<dbReference type="GO" id="GO:0097386">
    <property type="term" value="C:glial cell projection"/>
    <property type="evidence" value="ECO:0000314"/>
    <property type="project" value="MGI"/>
</dbReference>
<dbReference type="GO" id="GO:0005874">
    <property type="term" value="C:microtubule"/>
    <property type="evidence" value="ECO:0007669"/>
    <property type="project" value="UniProtKB-KW"/>
</dbReference>
<dbReference type="GO" id="GO:0036157">
    <property type="term" value="C:outer dynein arm"/>
    <property type="evidence" value="ECO:0007669"/>
    <property type="project" value="Ensembl"/>
</dbReference>
<dbReference type="GO" id="GO:0007368">
    <property type="term" value="P:determination of left/right symmetry"/>
    <property type="evidence" value="ECO:0000315"/>
    <property type="project" value="MGI"/>
</dbReference>
<dbReference type="GO" id="GO:0003351">
    <property type="term" value="P:epithelial cilium movement involved in extracellular fluid movement"/>
    <property type="evidence" value="ECO:0000315"/>
    <property type="project" value="MGI"/>
</dbReference>
<dbReference type="GO" id="GO:0030317">
    <property type="term" value="P:flagellated sperm motility"/>
    <property type="evidence" value="ECO:0007669"/>
    <property type="project" value="Ensembl"/>
</dbReference>
<dbReference type="GO" id="GO:0007507">
    <property type="term" value="P:heart development"/>
    <property type="evidence" value="ECO:0000315"/>
    <property type="project" value="MGI"/>
</dbReference>
<dbReference type="GO" id="GO:0008286">
    <property type="term" value="P:insulin receptor signaling pathway"/>
    <property type="evidence" value="ECO:0000314"/>
    <property type="project" value="CAFA"/>
</dbReference>
<dbReference type="GO" id="GO:0036158">
    <property type="term" value="P:outer dynein arm assembly"/>
    <property type="evidence" value="ECO:0007669"/>
    <property type="project" value="Ensembl"/>
</dbReference>
<dbReference type="FunFam" id="2.130.10.10:FF:000251">
    <property type="entry name" value="Dynein axonemal intermediate chain 1"/>
    <property type="match status" value="1"/>
</dbReference>
<dbReference type="FunFam" id="2.130.10.10:FF:000349">
    <property type="entry name" value="Dynein axonemal intermediate chain 1"/>
    <property type="match status" value="1"/>
</dbReference>
<dbReference type="Gene3D" id="2.130.10.10">
    <property type="entry name" value="YVTN repeat-like/Quinoprotein amine dehydrogenase"/>
    <property type="match status" value="2"/>
</dbReference>
<dbReference type="InterPro" id="IPR050687">
    <property type="entry name" value="Dynein_IC"/>
</dbReference>
<dbReference type="InterPro" id="IPR015943">
    <property type="entry name" value="WD40/YVTN_repeat-like_dom_sf"/>
</dbReference>
<dbReference type="InterPro" id="IPR036322">
    <property type="entry name" value="WD40_repeat_dom_sf"/>
</dbReference>
<dbReference type="InterPro" id="IPR001680">
    <property type="entry name" value="WD40_rpt"/>
</dbReference>
<dbReference type="PANTHER" id="PTHR12442:SF11">
    <property type="entry name" value="DYNEIN AXONEMAL INTERMEDIATE CHAIN 1"/>
    <property type="match status" value="1"/>
</dbReference>
<dbReference type="PANTHER" id="PTHR12442">
    <property type="entry name" value="DYNEIN INTERMEDIATE CHAIN"/>
    <property type="match status" value="1"/>
</dbReference>
<dbReference type="Pfam" id="PF00400">
    <property type="entry name" value="WD40"/>
    <property type="match status" value="2"/>
</dbReference>
<dbReference type="SMART" id="SM00320">
    <property type="entry name" value="WD40"/>
    <property type="match status" value="5"/>
</dbReference>
<dbReference type="SUPFAM" id="SSF50978">
    <property type="entry name" value="WD40 repeat-like"/>
    <property type="match status" value="1"/>
</dbReference>
<dbReference type="PROSITE" id="PS50082">
    <property type="entry name" value="WD_REPEATS_2"/>
    <property type="match status" value="1"/>
</dbReference>
<dbReference type="PROSITE" id="PS50294">
    <property type="entry name" value="WD_REPEATS_REGION"/>
    <property type="match status" value="1"/>
</dbReference>
<name>DNAI1_MOUSE</name>